<evidence type="ECO:0000305" key="1"/>
<comment type="cofactor">
    <cofactor evidence="1">
        <name>FAD</name>
        <dbReference type="ChEBI" id="CHEBI:57692"/>
    </cofactor>
</comment>
<comment type="similarity">
    <text evidence="1">Belongs to the flavin monoamine oxidase family.</text>
</comment>
<dbReference type="EC" id="1.4.3.-"/>
<dbReference type="EMBL" id="AE000516">
    <property type="protein sequence ID" value="AAK47598.1"/>
    <property type="molecule type" value="Genomic_DNA"/>
</dbReference>
<dbReference type="PIR" id="H70947">
    <property type="entry name" value="H70947"/>
</dbReference>
<dbReference type="SMR" id="P9WQ14"/>
<dbReference type="KEGG" id="mtc:MT3259"/>
<dbReference type="HOGENOM" id="CLU_004498_0_4_11"/>
<dbReference type="Proteomes" id="UP000001020">
    <property type="component" value="Chromosome"/>
</dbReference>
<dbReference type="GO" id="GO:0016491">
    <property type="term" value="F:oxidoreductase activity"/>
    <property type="evidence" value="ECO:0007669"/>
    <property type="project" value="UniProtKB-KW"/>
</dbReference>
<dbReference type="Gene3D" id="3.90.660.10">
    <property type="match status" value="1"/>
</dbReference>
<dbReference type="Gene3D" id="3.50.50.60">
    <property type="entry name" value="FAD/NAD(P)-binding domain"/>
    <property type="match status" value="1"/>
</dbReference>
<dbReference type="Gene3D" id="1.10.405.10">
    <property type="entry name" value="Guanine Nucleotide Dissociation Inhibitor, domain 1"/>
    <property type="match status" value="1"/>
</dbReference>
<dbReference type="InterPro" id="IPR002937">
    <property type="entry name" value="Amino_oxidase"/>
</dbReference>
<dbReference type="InterPro" id="IPR036188">
    <property type="entry name" value="FAD/NAD-bd_sf"/>
</dbReference>
<dbReference type="InterPro" id="IPR001613">
    <property type="entry name" value="Flavin_amine_oxidase"/>
</dbReference>
<dbReference type="InterPro" id="IPR050703">
    <property type="entry name" value="Flavin_MAO"/>
</dbReference>
<dbReference type="PANTHER" id="PTHR43563">
    <property type="entry name" value="AMINE OXIDASE"/>
    <property type="match status" value="1"/>
</dbReference>
<dbReference type="PANTHER" id="PTHR43563:SF1">
    <property type="entry name" value="AMINE OXIDASE [FLAVIN-CONTAINING] B"/>
    <property type="match status" value="1"/>
</dbReference>
<dbReference type="Pfam" id="PF01593">
    <property type="entry name" value="Amino_oxidase"/>
    <property type="match status" value="1"/>
</dbReference>
<dbReference type="PRINTS" id="PR00757">
    <property type="entry name" value="AMINEOXDASEF"/>
</dbReference>
<dbReference type="SUPFAM" id="SSF54373">
    <property type="entry name" value="FAD-linked reductases, C-terminal domain"/>
    <property type="match status" value="1"/>
</dbReference>
<dbReference type="SUPFAM" id="SSF51905">
    <property type="entry name" value="FAD/NAD(P)-binding domain"/>
    <property type="match status" value="1"/>
</dbReference>
<protein>
    <recommendedName>
        <fullName>Putative flavin-containing monoamine oxidase AofH</fullName>
        <ecNumber>1.4.3.-</ecNumber>
    </recommendedName>
</protein>
<name>AOFH_MYCTO</name>
<feature type="chain" id="PRO_0000426855" description="Putative flavin-containing monoamine oxidase AofH">
    <location>
        <begin position="1"/>
        <end position="454"/>
    </location>
</feature>
<keyword id="KW-0274">FAD</keyword>
<keyword id="KW-0285">Flavoprotein</keyword>
<keyword id="KW-0560">Oxidoreductase</keyword>
<keyword id="KW-1185">Reference proteome</keyword>
<organism>
    <name type="scientific">Mycobacterium tuberculosis (strain CDC 1551 / Oshkosh)</name>
    <dbReference type="NCBI Taxonomy" id="83331"/>
    <lineage>
        <taxon>Bacteria</taxon>
        <taxon>Bacillati</taxon>
        <taxon>Actinomycetota</taxon>
        <taxon>Actinomycetes</taxon>
        <taxon>Mycobacteriales</taxon>
        <taxon>Mycobacteriaceae</taxon>
        <taxon>Mycobacterium</taxon>
        <taxon>Mycobacterium tuberculosis complex</taxon>
    </lineage>
</organism>
<sequence>MRLTRAVTNPPWTVDVVVVGAGFAGLAAARELTRQGHEVLVFEGRDRVGGRSLTGRVAGVPADMGGSFIGPTQDAVLALATELGIPTTPTHRDGRNVIQWRGSARSYRGTIPKLSLTGLIDIGRLRWQFERIARGVPVAAPWDARRARELDDVSLGEWLRLVRATSSSRNLMAIMTRVTWGCEPDDVSMLHAARYVRAAGGLDRLLDVKNGAQQDRVPGGTQQIAQAAAAQLGARVLLNAAVRRIDRHGAGVTVTSDQGQAEAGFVIVAIPPAHRVAIEFDPPLPPEYQQLAHHWPQGRLSKAYAAYSTPFWRASGYSGQALSDEAPVFITFDVSPHADGPGILMGFVDARGFDSLPIEERRRDALRCFASLFGDEALDPLDYVDYRWGTEEFAPGGPTAAVPPGSWTKYGHWLREPVGPIHWASTETADEWTGYFDGAVRSGQRAAAEVAALL</sequence>
<proteinExistence type="inferred from homology"/>
<accession>P9WQ14</accession>
<accession>L0TDC6</accession>
<accession>O53320</accession>
<accession>P63533</accession>
<reference key="1">
    <citation type="journal article" date="2002" name="J. Bacteriol.">
        <title>Whole-genome comparison of Mycobacterium tuberculosis clinical and laboratory strains.</title>
        <authorList>
            <person name="Fleischmann R.D."/>
            <person name="Alland D."/>
            <person name="Eisen J.A."/>
            <person name="Carpenter L."/>
            <person name="White O."/>
            <person name="Peterson J.D."/>
            <person name="DeBoy R.T."/>
            <person name="Dodson R.J."/>
            <person name="Gwinn M.L."/>
            <person name="Haft D.H."/>
            <person name="Hickey E.K."/>
            <person name="Kolonay J.F."/>
            <person name="Nelson W.C."/>
            <person name="Umayam L.A."/>
            <person name="Ermolaeva M.D."/>
            <person name="Salzberg S.L."/>
            <person name="Delcher A."/>
            <person name="Utterback T.R."/>
            <person name="Weidman J.F."/>
            <person name="Khouri H.M."/>
            <person name="Gill J."/>
            <person name="Mikula A."/>
            <person name="Bishai W."/>
            <person name="Jacobs W.R. Jr."/>
            <person name="Venter J.C."/>
            <person name="Fraser C.M."/>
        </authorList>
    </citation>
    <scope>NUCLEOTIDE SEQUENCE [LARGE SCALE GENOMIC DNA]</scope>
    <source>
        <strain>CDC 1551 / Oshkosh</strain>
    </source>
</reference>
<gene>
    <name type="primary">aofH</name>
    <name type="ordered locus">MT3259</name>
</gene>